<comment type="function">
    <text evidence="1">Molecular chaperone. Has ATPase activity.</text>
</comment>
<comment type="subunit">
    <text evidence="1">Homodimer.</text>
</comment>
<comment type="subcellular location">
    <subcellularLocation>
        <location evidence="1">Cytoplasm</location>
    </subcellularLocation>
</comment>
<comment type="similarity">
    <text evidence="1">Belongs to the heat shock protein 90 family.</text>
</comment>
<evidence type="ECO:0000255" key="1">
    <source>
        <dbReference type="HAMAP-Rule" id="MF_00505"/>
    </source>
</evidence>
<keyword id="KW-0067">ATP-binding</keyword>
<keyword id="KW-0143">Chaperone</keyword>
<keyword id="KW-0963">Cytoplasm</keyword>
<keyword id="KW-0547">Nucleotide-binding</keyword>
<keyword id="KW-1185">Reference proteome</keyword>
<keyword id="KW-0346">Stress response</keyword>
<sequence length="637" mass="72890">MAEAGQMEKHGFQTEVKQLLHLMIHSLYSNKEIFLRELVSNASDAADKLRFKALSDNSLYGDDSDLHVRVSVDKDSRTITISDNGVGMTRDDVMNNLGTIAKSGTAEFFGQLSGDEAKDSKLIGQFGVGFYSAFIVADEVTVRTRSALDKDARGVEWRSQGEGDFEIADIDKARRGTDIILHLKDDADEFLDENRLRGIINKYSEHLSIPVQMWKEPVPESEDDEGNKVEGQPGEWETVNSGQALWTREKSDITDEEYKEFYKTVAHDFDEPLLWSHNKVEGTTEYTNLLYIPKRAPWDLWNREQQHGVKLYVKRVFIMDDAEQLMPTYLRFVRGLVDSNDLPLNVSREILQDNKITRAMRNGSTKKVLQMLKKLAKDDKEQYQQFWDTFGNVLKEGPAEDHTNRERIAELLRFASTHNDGAVQSVSLDDYIERMKEGQDKIFYIVADSYEAARNNPALEIFNKKGIEVLLLSERIDEWLMSHLTEFKEKQLQSVTRGDLDLGELDDEEDKAEQEKAEEAFKENLERFEKALGDKVKKVRVTNRLTNSPACIITDDNDMSTQMAKLMEAAGQAVPETKYIFEVNPEHPLVQRMLTKEDDTFKEWAEVLLDQATLAERGNLKDPASFVTRLNKLMLNA</sequence>
<reference key="1">
    <citation type="journal article" date="2004" name="Proc. Natl. Acad. Sci. U.S.A.">
        <title>Genome sequence of the deep-sea gamma-proteobacterium Idiomarina loihiensis reveals amino acid fermentation as a source of carbon and energy.</title>
        <authorList>
            <person name="Hou S."/>
            <person name="Saw J.H."/>
            <person name="Lee K.S."/>
            <person name="Freitas T.A."/>
            <person name="Belisle C."/>
            <person name="Kawarabayasi Y."/>
            <person name="Donachie S.P."/>
            <person name="Pikina A."/>
            <person name="Galperin M.Y."/>
            <person name="Koonin E.V."/>
            <person name="Makarova K.S."/>
            <person name="Omelchenko M.V."/>
            <person name="Sorokin A."/>
            <person name="Wolf Y.I."/>
            <person name="Li Q.X."/>
            <person name="Keum Y.S."/>
            <person name="Campbell S."/>
            <person name="Denery J."/>
            <person name="Aizawa S."/>
            <person name="Shibata S."/>
            <person name="Malahoff A."/>
            <person name="Alam M."/>
        </authorList>
    </citation>
    <scope>NUCLEOTIDE SEQUENCE [LARGE SCALE GENOMIC DNA]</scope>
    <source>
        <strain>ATCC BAA-735 / DSM 15497 / L2-TR</strain>
    </source>
</reference>
<gene>
    <name evidence="1" type="primary">htpG</name>
    <name type="ordered locus">IL1846</name>
</gene>
<protein>
    <recommendedName>
        <fullName evidence="1">Chaperone protein HtpG</fullName>
    </recommendedName>
    <alternativeName>
        <fullName evidence="1">Heat shock protein HtpG</fullName>
    </alternativeName>
    <alternativeName>
        <fullName evidence="1">High temperature protein G</fullName>
    </alternativeName>
</protein>
<organism>
    <name type="scientific">Idiomarina loihiensis (strain ATCC BAA-735 / DSM 15497 / L2-TR)</name>
    <dbReference type="NCBI Taxonomy" id="283942"/>
    <lineage>
        <taxon>Bacteria</taxon>
        <taxon>Pseudomonadati</taxon>
        <taxon>Pseudomonadota</taxon>
        <taxon>Gammaproteobacteria</taxon>
        <taxon>Alteromonadales</taxon>
        <taxon>Idiomarinaceae</taxon>
        <taxon>Idiomarina</taxon>
    </lineage>
</organism>
<feature type="chain" id="PRO_0000224211" description="Chaperone protein HtpG">
    <location>
        <begin position="1"/>
        <end position="637"/>
    </location>
</feature>
<feature type="region of interest" description="A; substrate-binding" evidence="1">
    <location>
        <begin position="1"/>
        <end position="348"/>
    </location>
</feature>
<feature type="region of interest" description="B" evidence="1">
    <location>
        <begin position="349"/>
        <end position="565"/>
    </location>
</feature>
<feature type="region of interest" description="C" evidence="1">
    <location>
        <begin position="566"/>
        <end position="637"/>
    </location>
</feature>
<name>HTPG_IDILO</name>
<proteinExistence type="inferred from homology"/>
<accession>Q5QWR2</accession>
<dbReference type="EMBL" id="AE017340">
    <property type="protein sequence ID" value="AAV82678.1"/>
    <property type="molecule type" value="Genomic_DNA"/>
</dbReference>
<dbReference type="RefSeq" id="WP_011235078.1">
    <property type="nucleotide sequence ID" value="NC_006512.1"/>
</dbReference>
<dbReference type="SMR" id="Q5QWR2"/>
<dbReference type="STRING" id="283942.IL1846"/>
<dbReference type="GeneID" id="41337030"/>
<dbReference type="KEGG" id="ilo:IL1846"/>
<dbReference type="eggNOG" id="COG0326">
    <property type="taxonomic scope" value="Bacteria"/>
</dbReference>
<dbReference type="HOGENOM" id="CLU_006684_3_0_6"/>
<dbReference type="OrthoDB" id="9802640at2"/>
<dbReference type="Proteomes" id="UP000001171">
    <property type="component" value="Chromosome"/>
</dbReference>
<dbReference type="GO" id="GO:0005737">
    <property type="term" value="C:cytoplasm"/>
    <property type="evidence" value="ECO:0007669"/>
    <property type="project" value="UniProtKB-SubCell"/>
</dbReference>
<dbReference type="GO" id="GO:0005524">
    <property type="term" value="F:ATP binding"/>
    <property type="evidence" value="ECO:0007669"/>
    <property type="project" value="UniProtKB-UniRule"/>
</dbReference>
<dbReference type="GO" id="GO:0016887">
    <property type="term" value="F:ATP hydrolysis activity"/>
    <property type="evidence" value="ECO:0007669"/>
    <property type="project" value="InterPro"/>
</dbReference>
<dbReference type="GO" id="GO:0140662">
    <property type="term" value="F:ATP-dependent protein folding chaperone"/>
    <property type="evidence" value="ECO:0007669"/>
    <property type="project" value="InterPro"/>
</dbReference>
<dbReference type="GO" id="GO:0051082">
    <property type="term" value="F:unfolded protein binding"/>
    <property type="evidence" value="ECO:0007669"/>
    <property type="project" value="UniProtKB-UniRule"/>
</dbReference>
<dbReference type="CDD" id="cd16927">
    <property type="entry name" value="HATPase_Hsp90-like"/>
    <property type="match status" value="1"/>
</dbReference>
<dbReference type="FunFam" id="3.30.230.80:FF:000002">
    <property type="entry name" value="Molecular chaperone HtpG"/>
    <property type="match status" value="1"/>
</dbReference>
<dbReference type="FunFam" id="3.30.565.10:FF:000009">
    <property type="entry name" value="Molecular chaperone HtpG"/>
    <property type="match status" value="1"/>
</dbReference>
<dbReference type="Gene3D" id="3.30.230.80">
    <property type="match status" value="1"/>
</dbReference>
<dbReference type="Gene3D" id="3.40.50.11260">
    <property type="match status" value="1"/>
</dbReference>
<dbReference type="Gene3D" id="1.20.120.790">
    <property type="entry name" value="Heat shock protein 90, C-terminal domain"/>
    <property type="match status" value="1"/>
</dbReference>
<dbReference type="Gene3D" id="3.30.565.10">
    <property type="entry name" value="Histidine kinase-like ATPase, C-terminal domain"/>
    <property type="match status" value="1"/>
</dbReference>
<dbReference type="HAMAP" id="MF_00505">
    <property type="entry name" value="HSP90"/>
    <property type="match status" value="1"/>
</dbReference>
<dbReference type="InterPro" id="IPR036890">
    <property type="entry name" value="HATPase_C_sf"/>
</dbReference>
<dbReference type="InterPro" id="IPR019805">
    <property type="entry name" value="Heat_shock_protein_90_CS"/>
</dbReference>
<dbReference type="InterPro" id="IPR037196">
    <property type="entry name" value="HSP90_C"/>
</dbReference>
<dbReference type="InterPro" id="IPR001404">
    <property type="entry name" value="Hsp90_fam"/>
</dbReference>
<dbReference type="InterPro" id="IPR020575">
    <property type="entry name" value="Hsp90_N"/>
</dbReference>
<dbReference type="InterPro" id="IPR020568">
    <property type="entry name" value="Ribosomal_Su5_D2-typ_SF"/>
</dbReference>
<dbReference type="NCBIfam" id="NF003555">
    <property type="entry name" value="PRK05218.1"/>
    <property type="match status" value="1"/>
</dbReference>
<dbReference type="PANTHER" id="PTHR11528">
    <property type="entry name" value="HEAT SHOCK PROTEIN 90 FAMILY MEMBER"/>
    <property type="match status" value="1"/>
</dbReference>
<dbReference type="Pfam" id="PF13589">
    <property type="entry name" value="HATPase_c_3"/>
    <property type="match status" value="1"/>
</dbReference>
<dbReference type="Pfam" id="PF00183">
    <property type="entry name" value="HSP90"/>
    <property type="match status" value="1"/>
</dbReference>
<dbReference type="PIRSF" id="PIRSF002583">
    <property type="entry name" value="Hsp90"/>
    <property type="match status" value="1"/>
</dbReference>
<dbReference type="PRINTS" id="PR00775">
    <property type="entry name" value="HEATSHOCK90"/>
</dbReference>
<dbReference type="SMART" id="SM00387">
    <property type="entry name" value="HATPase_c"/>
    <property type="match status" value="1"/>
</dbReference>
<dbReference type="SUPFAM" id="SSF55874">
    <property type="entry name" value="ATPase domain of HSP90 chaperone/DNA topoisomerase II/histidine kinase"/>
    <property type="match status" value="1"/>
</dbReference>
<dbReference type="SUPFAM" id="SSF110942">
    <property type="entry name" value="HSP90 C-terminal domain"/>
    <property type="match status" value="1"/>
</dbReference>
<dbReference type="SUPFAM" id="SSF54211">
    <property type="entry name" value="Ribosomal protein S5 domain 2-like"/>
    <property type="match status" value="1"/>
</dbReference>
<dbReference type="PROSITE" id="PS00298">
    <property type="entry name" value="HSP90"/>
    <property type="match status" value="1"/>
</dbReference>